<sequence length="85" mass="9818">MSLLDYFKSKKKPSTAVMAKERLQIIVAHQRGQRDTPDYFPQMKQEIIAVIRKYVQISDDQVSVQLDQNDANLSVLELNVTLPDR</sequence>
<feature type="chain" id="PRO_1000047793" description="Cell division topological specificity factor">
    <location>
        <begin position="1"/>
        <end position="85"/>
    </location>
</feature>
<reference key="1">
    <citation type="submission" date="2007-02" db="EMBL/GenBank/DDBJ databases">
        <title>Complete sequence of chromosome of Shewanella baltica OS155.</title>
        <authorList>
            <consortium name="US DOE Joint Genome Institute"/>
            <person name="Copeland A."/>
            <person name="Lucas S."/>
            <person name="Lapidus A."/>
            <person name="Barry K."/>
            <person name="Detter J.C."/>
            <person name="Glavina del Rio T."/>
            <person name="Hammon N."/>
            <person name="Israni S."/>
            <person name="Dalin E."/>
            <person name="Tice H."/>
            <person name="Pitluck S."/>
            <person name="Sims D.R."/>
            <person name="Brettin T."/>
            <person name="Bruce D."/>
            <person name="Han C."/>
            <person name="Tapia R."/>
            <person name="Brainard J."/>
            <person name="Schmutz J."/>
            <person name="Larimer F."/>
            <person name="Land M."/>
            <person name="Hauser L."/>
            <person name="Kyrpides N."/>
            <person name="Mikhailova N."/>
            <person name="Brettar I."/>
            <person name="Klappenbach J."/>
            <person name="Konstantinidis K."/>
            <person name="Rodrigues J."/>
            <person name="Tiedje J."/>
            <person name="Richardson P."/>
        </authorList>
    </citation>
    <scope>NUCLEOTIDE SEQUENCE [LARGE SCALE GENOMIC DNA]</scope>
    <source>
        <strain>OS155 / ATCC BAA-1091</strain>
    </source>
</reference>
<dbReference type="EMBL" id="CP000563">
    <property type="protein sequence ID" value="ABN61372.1"/>
    <property type="molecule type" value="Genomic_DNA"/>
</dbReference>
<dbReference type="RefSeq" id="WP_006081361.1">
    <property type="nucleotide sequence ID" value="NC_009052.1"/>
</dbReference>
<dbReference type="SMR" id="A3D3Q9"/>
<dbReference type="STRING" id="325240.Sbal_1866"/>
<dbReference type="GeneID" id="11772106"/>
<dbReference type="KEGG" id="sbl:Sbal_1866"/>
<dbReference type="HOGENOM" id="CLU_137929_2_2_6"/>
<dbReference type="OrthoDB" id="9802655at2"/>
<dbReference type="Proteomes" id="UP000001557">
    <property type="component" value="Chromosome"/>
</dbReference>
<dbReference type="GO" id="GO:0051301">
    <property type="term" value="P:cell division"/>
    <property type="evidence" value="ECO:0007669"/>
    <property type="project" value="UniProtKB-KW"/>
</dbReference>
<dbReference type="GO" id="GO:0032955">
    <property type="term" value="P:regulation of division septum assembly"/>
    <property type="evidence" value="ECO:0007669"/>
    <property type="project" value="InterPro"/>
</dbReference>
<dbReference type="FunFam" id="3.30.1070.10:FF:000001">
    <property type="entry name" value="Cell division topological specificity factor"/>
    <property type="match status" value="1"/>
</dbReference>
<dbReference type="Gene3D" id="3.30.1070.10">
    <property type="entry name" value="Cell division topological specificity factor MinE"/>
    <property type="match status" value="1"/>
</dbReference>
<dbReference type="HAMAP" id="MF_00262">
    <property type="entry name" value="MinE"/>
    <property type="match status" value="1"/>
</dbReference>
<dbReference type="InterPro" id="IPR005527">
    <property type="entry name" value="MinE"/>
</dbReference>
<dbReference type="InterPro" id="IPR036707">
    <property type="entry name" value="MinE_sf"/>
</dbReference>
<dbReference type="NCBIfam" id="TIGR01215">
    <property type="entry name" value="minE"/>
    <property type="match status" value="1"/>
</dbReference>
<dbReference type="NCBIfam" id="NF001422">
    <property type="entry name" value="PRK00296.1"/>
    <property type="match status" value="1"/>
</dbReference>
<dbReference type="Pfam" id="PF03776">
    <property type="entry name" value="MinE"/>
    <property type="match status" value="1"/>
</dbReference>
<dbReference type="SUPFAM" id="SSF55229">
    <property type="entry name" value="Cell division protein MinE topological specificity domain"/>
    <property type="match status" value="1"/>
</dbReference>
<protein>
    <recommendedName>
        <fullName evidence="1">Cell division topological specificity factor</fullName>
    </recommendedName>
</protein>
<comment type="function">
    <text evidence="1">Prevents the cell division inhibition by proteins MinC and MinD at internal division sites while permitting inhibition at polar sites. This ensures cell division at the proper site by restricting the formation of a division septum at the midpoint of the long axis of the cell.</text>
</comment>
<comment type="similarity">
    <text evidence="1">Belongs to the MinE family.</text>
</comment>
<proteinExistence type="inferred from homology"/>
<organism>
    <name type="scientific">Shewanella baltica (strain OS155 / ATCC BAA-1091)</name>
    <dbReference type="NCBI Taxonomy" id="325240"/>
    <lineage>
        <taxon>Bacteria</taxon>
        <taxon>Pseudomonadati</taxon>
        <taxon>Pseudomonadota</taxon>
        <taxon>Gammaproteobacteria</taxon>
        <taxon>Alteromonadales</taxon>
        <taxon>Shewanellaceae</taxon>
        <taxon>Shewanella</taxon>
    </lineage>
</organism>
<keyword id="KW-0131">Cell cycle</keyword>
<keyword id="KW-0132">Cell division</keyword>
<keyword id="KW-1185">Reference proteome</keyword>
<evidence type="ECO:0000255" key="1">
    <source>
        <dbReference type="HAMAP-Rule" id="MF_00262"/>
    </source>
</evidence>
<name>MINE_SHEB5</name>
<gene>
    <name evidence="1" type="primary">minE</name>
    <name type="ordered locus">Sbal_1866</name>
</gene>
<accession>A3D3Q9</accession>